<proteinExistence type="evidence at protein level"/>
<reference key="1">
    <citation type="journal article" date="2014" name="Plant J.">
        <title>The plant glycosyltransferase clone collection for functional genomics.</title>
        <authorList>
            <person name="Lao J."/>
            <person name="Oikawa A."/>
            <person name="Bromley J.R."/>
            <person name="McInerney P."/>
            <person name="Suttangkakul A."/>
            <person name="Smith-Moritz A.M."/>
            <person name="Plahar H."/>
            <person name="Chiu T.-Y."/>
            <person name="Gonzalez Fernandez-Nino S.M.G."/>
            <person name="Ebert B."/>
            <person name="Yang F."/>
            <person name="Christiansen K.M."/>
            <person name="Hansen S.F."/>
            <person name="Stonebloom S."/>
            <person name="Adams P.D."/>
            <person name="Ronald P.C."/>
            <person name="Hillson N.J."/>
            <person name="Hadi M.Z."/>
            <person name="Vega-Sanchez M.E."/>
            <person name="Loque D."/>
            <person name="Scheller H.V."/>
            <person name="Heazlewood J.L."/>
        </authorList>
    </citation>
    <scope>NUCLEOTIDE SEQUENCE [MRNA]</scope>
    <source>
        <strain>cv. Columbia</strain>
    </source>
</reference>
<reference key="2">
    <citation type="journal article" date="2000" name="Nature">
        <title>Sequence and analysis of chromosome 1 of the plant Arabidopsis thaliana.</title>
        <authorList>
            <person name="Theologis A."/>
            <person name="Ecker J.R."/>
            <person name="Palm C.J."/>
            <person name="Federspiel N.A."/>
            <person name="Kaul S."/>
            <person name="White O."/>
            <person name="Alonso J."/>
            <person name="Altafi H."/>
            <person name="Araujo R."/>
            <person name="Bowman C.L."/>
            <person name="Brooks S.Y."/>
            <person name="Buehler E."/>
            <person name="Chan A."/>
            <person name="Chao Q."/>
            <person name="Chen H."/>
            <person name="Cheuk R.F."/>
            <person name="Chin C.W."/>
            <person name="Chung M.K."/>
            <person name="Conn L."/>
            <person name="Conway A.B."/>
            <person name="Conway A.R."/>
            <person name="Creasy T.H."/>
            <person name="Dewar K."/>
            <person name="Dunn P."/>
            <person name="Etgu P."/>
            <person name="Feldblyum T.V."/>
            <person name="Feng J.-D."/>
            <person name="Fong B."/>
            <person name="Fujii C.Y."/>
            <person name="Gill J.E."/>
            <person name="Goldsmith A.D."/>
            <person name="Haas B."/>
            <person name="Hansen N.F."/>
            <person name="Hughes B."/>
            <person name="Huizar L."/>
            <person name="Hunter J.L."/>
            <person name="Jenkins J."/>
            <person name="Johnson-Hopson C."/>
            <person name="Khan S."/>
            <person name="Khaykin E."/>
            <person name="Kim C.J."/>
            <person name="Koo H.L."/>
            <person name="Kremenetskaia I."/>
            <person name="Kurtz D.B."/>
            <person name="Kwan A."/>
            <person name="Lam B."/>
            <person name="Langin-Hooper S."/>
            <person name="Lee A."/>
            <person name="Lee J.M."/>
            <person name="Lenz C.A."/>
            <person name="Li J.H."/>
            <person name="Li Y.-P."/>
            <person name="Lin X."/>
            <person name="Liu S.X."/>
            <person name="Liu Z.A."/>
            <person name="Luros J.S."/>
            <person name="Maiti R."/>
            <person name="Marziali A."/>
            <person name="Militscher J."/>
            <person name="Miranda M."/>
            <person name="Nguyen M."/>
            <person name="Nierman W.C."/>
            <person name="Osborne B.I."/>
            <person name="Pai G."/>
            <person name="Peterson J."/>
            <person name="Pham P.K."/>
            <person name="Rizzo M."/>
            <person name="Rooney T."/>
            <person name="Rowley D."/>
            <person name="Sakano H."/>
            <person name="Salzberg S.L."/>
            <person name="Schwartz J.R."/>
            <person name="Shinn P."/>
            <person name="Southwick A.M."/>
            <person name="Sun H."/>
            <person name="Tallon L.J."/>
            <person name="Tambunga G."/>
            <person name="Toriumi M.J."/>
            <person name="Town C.D."/>
            <person name="Utterback T."/>
            <person name="Van Aken S."/>
            <person name="Vaysberg M."/>
            <person name="Vysotskaia V.S."/>
            <person name="Walker M."/>
            <person name="Wu D."/>
            <person name="Yu G."/>
            <person name="Fraser C.M."/>
            <person name="Venter J.C."/>
            <person name="Davis R.W."/>
        </authorList>
    </citation>
    <scope>NUCLEOTIDE SEQUENCE [LARGE SCALE GENOMIC DNA]</scope>
    <source>
        <strain>cv. Columbia</strain>
    </source>
</reference>
<reference key="3">
    <citation type="journal article" date="2017" name="Plant J.">
        <title>Araport11: a complete reannotation of the Arabidopsis thaliana reference genome.</title>
        <authorList>
            <person name="Cheng C.Y."/>
            <person name="Krishnakumar V."/>
            <person name="Chan A.P."/>
            <person name="Thibaud-Nissen F."/>
            <person name="Schobel S."/>
            <person name="Town C.D."/>
        </authorList>
    </citation>
    <scope>GENOME REANNOTATION</scope>
    <source>
        <strain>cv. Columbia</strain>
    </source>
</reference>
<reference key="4">
    <citation type="journal article" date="2003" name="Science">
        <title>Empirical analysis of transcriptional activity in the Arabidopsis genome.</title>
        <authorList>
            <person name="Yamada K."/>
            <person name="Lim J."/>
            <person name="Dale J.M."/>
            <person name="Chen H."/>
            <person name="Shinn P."/>
            <person name="Palm C.J."/>
            <person name="Southwick A.M."/>
            <person name="Wu H.C."/>
            <person name="Kim C.J."/>
            <person name="Nguyen M."/>
            <person name="Pham P.K."/>
            <person name="Cheuk R.F."/>
            <person name="Karlin-Newmann G."/>
            <person name="Liu S.X."/>
            <person name="Lam B."/>
            <person name="Sakano H."/>
            <person name="Wu T."/>
            <person name="Yu G."/>
            <person name="Miranda M."/>
            <person name="Quach H.L."/>
            <person name="Tripp M."/>
            <person name="Chang C.H."/>
            <person name="Lee J.M."/>
            <person name="Toriumi M.J."/>
            <person name="Chan M.M."/>
            <person name="Tang C.C."/>
            <person name="Onodera C.S."/>
            <person name="Deng J.M."/>
            <person name="Akiyama K."/>
            <person name="Ansari Y."/>
            <person name="Arakawa T."/>
            <person name="Banh J."/>
            <person name="Banno F."/>
            <person name="Bowser L."/>
            <person name="Brooks S.Y."/>
            <person name="Carninci P."/>
            <person name="Chao Q."/>
            <person name="Choy N."/>
            <person name="Enju A."/>
            <person name="Goldsmith A.D."/>
            <person name="Gurjal M."/>
            <person name="Hansen N.F."/>
            <person name="Hayashizaki Y."/>
            <person name="Johnson-Hopson C."/>
            <person name="Hsuan V.W."/>
            <person name="Iida K."/>
            <person name="Karnes M."/>
            <person name="Khan S."/>
            <person name="Koesema E."/>
            <person name="Ishida J."/>
            <person name="Jiang P.X."/>
            <person name="Jones T."/>
            <person name="Kawai J."/>
            <person name="Kamiya A."/>
            <person name="Meyers C."/>
            <person name="Nakajima M."/>
            <person name="Narusaka M."/>
            <person name="Seki M."/>
            <person name="Sakurai T."/>
            <person name="Satou M."/>
            <person name="Tamse R."/>
            <person name="Vaysberg M."/>
            <person name="Wallender E.K."/>
            <person name="Wong C."/>
            <person name="Yamamura Y."/>
            <person name="Yuan S."/>
            <person name="Shinozaki K."/>
            <person name="Davis R.W."/>
            <person name="Theologis A."/>
            <person name="Ecker J.R."/>
        </authorList>
    </citation>
    <scope>NUCLEOTIDE SEQUENCE [LARGE SCALE MRNA]</scope>
    <source>
        <strain>cv. Columbia</strain>
    </source>
</reference>
<reference key="5">
    <citation type="journal article" date="2007" name="Plant Cell">
        <title>A unique beta-1,3-galactosyltransferase is indispensable for the biosynthesis of N-glycans containing Lewis a structures in Arabidopsis thaliana.</title>
        <authorList>
            <person name="Strasser R."/>
            <person name="Bondili J.S."/>
            <person name="Vavra U."/>
            <person name="Schoberer J."/>
            <person name="Svoboda B."/>
            <person name="Gloessl J."/>
            <person name="Leonard R."/>
            <person name="Stadlmann J."/>
            <person name="Altmann F."/>
            <person name="Steinkellner H."/>
            <person name="Mach L."/>
        </authorList>
    </citation>
    <scope>TISSUE SPECIFICITY</scope>
</reference>
<reference key="6">
    <citation type="journal article" date="2008" name="Plant Mol. Biol.">
        <title>Identification of a novel group of putative Arabidopsis thaliana beta-(1,3)-galactosyltransferases.</title>
        <authorList>
            <person name="Qu Y."/>
            <person name="Egelund J."/>
            <person name="Gilson P.R."/>
            <person name="Houghton F."/>
            <person name="Gleeson P.A."/>
            <person name="Schultz C.J."/>
            <person name="Bacic A."/>
        </authorList>
    </citation>
    <scope>GENE FAMILY</scope>
    <scope>NOMENCLATURE</scope>
</reference>
<reference key="7">
    <citation type="journal article" date="2015" name="BMC Plant Biol.">
        <title>A small multigene hydroxyproline-O-galactosyltransferase family functions in arabinogalactan-protein glycosylation, growth and development in Arabidopsis.</title>
        <authorList>
            <person name="Basu D."/>
            <person name="Tian L."/>
            <person name="Wang W."/>
            <person name="Bobbs S."/>
            <person name="Herock H."/>
            <person name="Travers A."/>
            <person name="Showalter A.M."/>
        </authorList>
    </citation>
    <scope>FUNCTION</scope>
    <scope>COFACTOR</scope>
    <scope>DISRUPTION PHENOTYPE</scope>
</reference>
<reference key="8">
    <citation type="journal article" date="2015" name="PLoS ONE">
        <title>Two hydroxyproline galactosyltransferases, GALT5 and GALT2, function in arabinogalactan-protein glycosylation, growth and development in Arabidopsis.</title>
        <authorList>
            <person name="Basu D."/>
            <person name="Wang W."/>
            <person name="Ma S."/>
            <person name="DeBrosse T."/>
            <person name="Poirier E."/>
            <person name="Emch K."/>
            <person name="Soukup E."/>
            <person name="Tian L."/>
            <person name="Showalter A.M."/>
        </authorList>
    </citation>
    <scope>FUNCTION</scope>
    <scope>BIOPHYSICOCHEMICAL PROPERTIES</scope>
    <scope>SUBCELLULAR LOCATION</scope>
    <scope>DISRUPTION PHENOTYPE</scope>
</reference>
<reference key="9">
    <citation type="journal article" date="2016" name="PLoS ONE">
        <title>Glycosylation of a fasciclin-like arabinogalactan-protein (SOS5) mediates root growth and seed mucilage adherence via a cell wall receptor-like kinase (FEI1/FEI2) pathway in Arabidopsis.</title>
        <authorList>
            <person name="Basu D."/>
            <person name="Tian L."/>
            <person name="Debrosse T."/>
            <person name="Poirier E."/>
            <person name="Emch K."/>
            <person name="Herock H."/>
            <person name="Travers A."/>
            <person name="Showalter A.M."/>
        </authorList>
    </citation>
    <scope>INDUCTION BY SALT STRESS</scope>
</reference>
<feature type="chain" id="PRO_0000359428" description="Hydroxyproline O-galactosyltransferase GALT5">
    <location>
        <begin position="1"/>
        <end position="672"/>
    </location>
</feature>
<feature type="topological domain" description="Cytoplasmic" evidence="8">
    <location>
        <begin position="1"/>
        <end position="28"/>
    </location>
</feature>
<feature type="transmembrane region" description="Helical; Signal-anchor for type II membrane protein" evidence="1">
    <location>
        <begin position="29"/>
        <end position="49"/>
    </location>
</feature>
<feature type="topological domain" description="Lumenal" evidence="8">
    <location>
        <begin position="50"/>
        <end position="672"/>
    </location>
</feature>
<feature type="domain" description="Galectin" evidence="2">
    <location>
        <begin position="191"/>
        <end position="392"/>
    </location>
</feature>
<feature type="glycosylation site" description="N-linked (GlcNAc...) asparagine" evidence="1">
    <location>
        <position position="306"/>
    </location>
</feature>
<feature type="glycosylation site" description="N-linked (GlcNAc...) asparagine" evidence="1">
    <location>
        <position position="620"/>
    </location>
</feature>
<keyword id="KW-0325">Glycoprotein</keyword>
<keyword id="KW-0328">Glycosyltransferase</keyword>
<keyword id="KW-0333">Golgi apparatus</keyword>
<keyword id="KW-0464">Manganese</keyword>
<keyword id="KW-0472">Membrane</keyword>
<keyword id="KW-1185">Reference proteome</keyword>
<keyword id="KW-0735">Signal-anchor</keyword>
<keyword id="KW-0808">Transferase</keyword>
<keyword id="KW-0812">Transmembrane</keyword>
<keyword id="KW-1133">Transmembrane helix</keyword>
<name>B3GTI_ARATH</name>
<sequence>MKKPKLSKVEKIDKIDLFSSLWKQRSVRVIMAIGFLYLVIVSVEIPLVFKSWSSSSVPLDALSRLEKLNNEQEPQVEIIPNPPLEPVSYPVSNPTIVTRTDLVQNKVREHHRGVLSSLRFDSETFDPSSKDGSVELHKSAKEAWQLGRKLWKELESGRLEKLVEKPEKNKPDSCPHSVSLTGSEFMNRENKLMELPCGLTLGSHITLVGRPRKAHPKEGDWSKLVSQFVIELQGLKTVEGEDPPRILHFNPRLKGDWSKKPVIEQNSCYRMQWGPAQRCEGWKSRDDEETVDSHVKCEKWIRDDDNYSEGSRARWWLNRLIGRRKRVKVEWPFPFVEEKLFVLTLSAGLEGYHINVDGKHVTSFPYRTGFTLEDATGLTVNGDIDVHSVFVASLPTSHPSFAPQRHLELSKRWQAPVVPDGPVEIFIGILSAGNHFSERMAVRKSWMQHVLITSAKVVARFFVALHGRKEVNVELKKEAEYFGDIVLVPYMDSYDLVVLKTVAICEHGALAFSAKYIMKCDDDTFVKLGAVINEVKKVPEGRSLYIGNMNYYHKPLRGGKWAVTYEEWPEEDYPPYANGPGYVLSSDIARFIVDKFERHKLRLFKMEDVSVGMWVEHFKNTTNPVDYRHSLRFCQFGCVENYYTAHYQSPRQMICLWDKLLRQNKPECCNMR</sequence>
<gene>
    <name evidence="7" type="primary">GALT5</name>
    <name evidence="9" type="synonym">B3GALT18</name>
    <name type="ordered locus">At1g74800</name>
    <name type="ORF">F25A4.23</name>
</gene>
<accession>Q8RX55</accession>
<accession>Q9SSG4</accession>
<accession>W8QP19</accession>
<comment type="function">
    <text evidence="4 5">Possesses hydroxyproline O-galactosyltransferase activity. Transfers galactose from UDP-galactose to hydroxyproline residues in the arabinogalactan proteins (AGPs). Is specific for AGPs containing non-contiguous peptidyl hydroxyproline residues. Utilizes UDP-galactose solely as sugar donor. The addition of galactose onto the peptidyl hydroxyproline residues in AGP core proteins represents the first committed step in arabinogalactan polysaccharide addition. AGP glycans play essential roles in both vegetative and reproductive plant growth.</text>
</comment>
<comment type="cofactor">
    <cofactor evidence="5">
        <name>Mn(2+)</name>
        <dbReference type="ChEBI" id="CHEBI:29035"/>
    </cofactor>
</comment>
<comment type="biophysicochemical properties">
    <phDependence>
        <text evidence="4">Optimum pH is 6.5.</text>
    </phDependence>
</comment>
<comment type="pathway">
    <text evidence="8">Protein modification; protein glycosylation.</text>
</comment>
<comment type="subcellular location">
    <subcellularLocation>
        <location evidence="4">Golgi apparatus membrane</location>
        <topology evidence="8">Single-pass type II membrane protein</topology>
    </subcellularLocation>
</comment>
<comment type="tissue specificity">
    <text evidence="3">Expressed in juvenile leaves, stems, cauline leaves and siliques.</text>
</comment>
<comment type="induction">
    <text evidence="6">By salt stress.</text>
</comment>
<comment type="disruption phenotype">
    <text evidence="4 5">Reduced levels of arabinogalactan proteins (PubMed:26690932). Defects in root hair growth, root elongation, pollen tube growth, flowering time, leaf development, silique length and inflorescence growth. Increased sensitivity to salt stress (PubMed:25974423).</text>
</comment>
<comment type="similarity">
    <text evidence="8">Belongs to the glycosyltransferase 31 family.</text>
</comment>
<comment type="sequence caution" evidence="8">
    <conflict type="erroneous initiation">
        <sequence resource="EMBL-CDS" id="AAD55296"/>
    </conflict>
    <text>Truncated N-terminus.</text>
</comment>
<evidence type="ECO:0000255" key="1"/>
<evidence type="ECO:0000255" key="2">
    <source>
        <dbReference type="PROSITE-ProRule" id="PRU00639"/>
    </source>
</evidence>
<evidence type="ECO:0000269" key="3">
    <source>
    </source>
</evidence>
<evidence type="ECO:0000269" key="4">
    <source>
    </source>
</evidence>
<evidence type="ECO:0000269" key="5">
    <source>
    </source>
</evidence>
<evidence type="ECO:0000269" key="6">
    <source>
    </source>
</evidence>
<evidence type="ECO:0000303" key="7">
    <source>
    </source>
</evidence>
<evidence type="ECO:0000305" key="8"/>
<evidence type="ECO:0000305" key="9">
    <source>
    </source>
</evidence>
<dbReference type="EC" id="2.4.1.-" evidence="4"/>
<dbReference type="EMBL" id="KJ138933">
    <property type="protein sequence ID" value="AHL38873.1"/>
    <property type="molecule type" value="mRNA"/>
</dbReference>
<dbReference type="EMBL" id="AC008263">
    <property type="protein sequence ID" value="AAD55296.1"/>
    <property type="status" value="ALT_INIT"/>
    <property type="molecule type" value="Genomic_DNA"/>
</dbReference>
<dbReference type="EMBL" id="CP002684">
    <property type="protein sequence ID" value="AEE35633.1"/>
    <property type="molecule type" value="Genomic_DNA"/>
</dbReference>
<dbReference type="EMBL" id="AY090451">
    <property type="protein sequence ID" value="AAL91295.1"/>
    <property type="molecule type" value="mRNA"/>
</dbReference>
<dbReference type="PIR" id="D96777">
    <property type="entry name" value="D96777"/>
</dbReference>
<dbReference type="RefSeq" id="NP_177618.2">
    <property type="nucleotide sequence ID" value="NM_106138.3"/>
</dbReference>
<dbReference type="SMR" id="Q8RX55"/>
<dbReference type="FunCoup" id="Q8RX55">
    <property type="interactions" value="624"/>
</dbReference>
<dbReference type="STRING" id="3702.Q8RX55"/>
<dbReference type="CAZy" id="GT31">
    <property type="family name" value="Glycosyltransferase Family 31"/>
</dbReference>
<dbReference type="GlyCosmos" id="Q8RX55">
    <property type="glycosylation" value="2 sites, No reported glycans"/>
</dbReference>
<dbReference type="GlyGen" id="Q8RX55">
    <property type="glycosylation" value="2 sites"/>
</dbReference>
<dbReference type="PaxDb" id="3702-AT1G74800.1"/>
<dbReference type="ProteomicsDB" id="241186"/>
<dbReference type="EnsemblPlants" id="AT1G74800.1">
    <property type="protein sequence ID" value="AT1G74800.1"/>
    <property type="gene ID" value="AT1G74800"/>
</dbReference>
<dbReference type="GeneID" id="843819"/>
<dbReference type="Gramene" id="AT1G74800.1">
    <property type="protein sequence ID" value="AT1G74800.1"/>
    <property type="gene ID" value="AT1G74800"/>
</dbReference>
<dbReference type="KEGG" id="ath:AT1G74800"/>
<dbReference type="Araport" id="AT1G74800"/>
<dbReference type="TAIR" id="AT1G74800">
    <property type="gene designation" value="GALT5"/>
</dbReference>
<dbReference type="eggNOG" id="KOG2287">
    <property type="taxonomic scope" value="Eukaryota"/>
</dbReference>
<dbReference type="HOGENOM" id="CLU_017063_2_0_1"/>
<dbReference type="InParanoid" id="Q8RX55"/>
<dbReference type="OMA" id="VRVIMAI"/>
<dbReference type="PhylomeDB" id="Q8RX55"/>
<dbReference type="UniPathway" id="UPA00378"/>
<dbReference type="PRO" id="PR:Q8RX55"/>
<dbReference type="Proteomes" id="UP000006548">
    <property type="component" value="Chromosome 1"/>
</dbReference>
<dbReference type="ExpressionAtlas" id="Q8RX55">
    <property type="expression patterns" value="baseline and differential"/>
</dbReference>
<dbReference type="GO" id="GO:0005768">
    <property type="term" value="C:endosome"/>
    <property type="evidence" value="ECO:0007005"/>
    <property type="project" value="TAIR"/>
</dbReference>
<dbReference type="GO" id="GO:0005794">
    <property type="term" value="C:Golgi apparatus"/>
    <property type="evidence" value="ECO:0000314"/>
    <property type="project" value="TAIR"/>
</dbReference>
<dbReference type="GO" id="GO:0000139">
    <property type="term" value="C:Golgi membrane"/>
    <property type="evidence" value="ECO:0007669"/>
    <property type="project" value="UniProtKB-SubCell"/>
</dbReference>
<dbReference type="GO" id="GO:0005802">
    <property type="term" value="C:trans-Golgi network"/>
    <property type="evidence" value="ECO:0007005"/>
    <property type="project" value="TAIR"/>
</dbReference>
<dbReference type="GO" id="GO:0030246">
    <property type="term" value="F:carbohydrate binding"/>
    <property type="evidence" value="ECO:0007669"/>
    <property type="project" value="InterPro"/>
</dbReference>
<dbReference type="GO" id="GO:1990714">
    <property type="term" value="F:hydroxyproline O-galactosyltransferase activity"/>
    <property type="evidence" value="ECO:0000314"/>
    <property type="project" value="TAIR"/>
</dbReference>
<dbReference type="GO" id="GO:0010405">
    <property type="term" value="P:arabinogalactan protein metabolic process"/>
    <property type="evidence" value="ECO:0000315"/>
    <property type="project" value="UniProtKB"/>
</dbReference>
<dbReference type="GO" id="GO:0018258">
    <property type="term" value="P:protein O-linked glycosylation via hydroxyproline"/>
    <property type="evidence" value="ECO:0000314"/>
    <property type="project" value="UniProtKB"/>
</dbReference>
<dbReference type="GO" id="GO:0080147">
    <property type="term" value="P:root hair cell development"/>
    <property type="evidence" value="ECO:0000315"/>
    <property type="project" value="TAIR"/>
</dbReference>
<dbReference type="CDD" id="cd00070">
    <property type="entry name" value="GLECT"/>
    <property type="match status" value="1"/>
</dbReference>
<dbReference type="FunFam" id="3.90.550.50:FF:000005">
    <property type="entry name" value="Hydroxyproline O-galactosyltransferase"/>
    <property type="match status" value="1"/>
</dbReference>
<dbReference type="FunFam" id="2.60.120.200:FF:000071">
    <property type="entry name" value="Hydroxyproline O-galactosyltransferase GALT2"/>
    <property type="match status" value="1"/>
</dbReference>
<dbReference type="FunFam" id="2.60.120.200:FF:000199">
    <property type="entry name" value="Hydroxyproline O-galactosyltransferase GALT4"/>
    <property type="match status" value="1"/>
</dbReference>
<dbReference type="Gene3D" id="2.60.120.200">
    <property type="match status" value="2"/>
</dbReference>
<dbReference type="Gene3D" id="3.90.550.50">
    <property type="match status" value="1"/>
</dbReference>
<dbReference type="InterPro" id="IPR013320">
    <property type="entry name" value="ConA-like_dom_sf"/>
</dbReference>
<dbReference type="InterPro" id="IPR001079">
    <property type="entry name" value="Galectin_CRD"/>
</dbReference>
<dbReference type="InterPro" id="IPR002659">
    <property type="entry name" value="Glyco_trans_31"/>
</dbReference>
<dbReference type="PANTHER" id="PTHR11214">
    <property type="entry name" value="BETA-1,3-N-ACETYLGLUCOSAMINYLTRANSFERASE"/>
    <property type="match status" value="1"/>
</dbReference>
<dbReference type="PANTHER" id="PTHR11214:SF359">
    <property type="entry name" value="HYDROXYPROLINE O-GALACTOSYLTRANSFERASE GALT5"/>
    <property type="match status" value="1"/>
</dbReference>
<dbReference type="Pfam" id="PF00337">
    <property type="entry name" value="Gal-bind_lectin"/>
    <property type="match status" value="1"/>
</dbReference>
<dbReference type="Pfam" id="PF01762">
    <property type="entry name" value="Galactosyl_T"/>
    <property type="match status" value="1"/>
</dbReference>
<dbReference type="SMART" id="SM00908">
    <property type="entry name" value="Gal-bind_lectin"/>
    <property type="match status" value="1"/>
</dbReference>
<dbReference type="SUPFAM" id="SSF49899">
    <property type="entry name" value="Concanavalin A-like lectins/glucanases"/>
    <property type="match status" value="1"/>
</dbReference>
<dbReference type="PROSITE" id="PS51304">
    <property type="entry name" value="GALECTIN"/>
    <property type="match status" value="1"/>
</dbReference>
<protein>
    <recommendedName>
        <fullName evidence="7">Hydroxyproline O-galactosyltransferase GALT5</fullName>
        <shortName evidence="7">AtGALT5</shortName>
        <ecNumber evidence="4">2.4.1.-</ecNumber>
    </recommendedName>
    <alternativeName>
        <fullName evidence="8">Beta-1,3-galactosyltransferase 18</fullName>
    </alternativeName>
</protein>
<organism>
    <name type="scientific">Arabidopsis thaliana</name>
    <name type="common">Mouse-ear cress</name>
    <dbReference type="NCBI Taxonomy" id="3702"/>
    <lineage>
        <taxon>Eukaryota</taxon>
        <taxon>Viridiplantae</taxon>
        <taxon>Streptophyta</taxon>
        <taxon>Embryophyta</taxon>
        <taxon>Tracheophyta</taxon>
        <taxon>Spermatophyta</taxon>
        <taxon>Magnoliopsida</taxon>
        <taxon>eudicotyledons</taxon>
        <taxon>Gunneridae</taxon>
        <taxon>Pentapetalae</taxon>
        <taxon>rosids</taxon>
        <taxon>malvids</taxon>
        <taxon>Brassicales</taxon>
        <taxon>Brassicaceae</taxon>
        <taxon>Camelineae</taxon>
        <taxon>Arabidopsis</taxon>
    </lineage>
</organism>